<organism>
    <name type="scientific">Mus musculus</name>
    <name type="common">Mouse</name>
    <dbReference type="NCBI Taxonomy" id="10090"/>
    <lineage>
        <taxon>Eukaryota</taxon>
        <taxon>Metazoa</taxon>
        <taxon>Chordata</taxon>
        <taxon>Craniata</taxon>
        <taxon>Vertebrata</taxon>
        <taxon>Euteleostomi</taxon>
        <taxon>Mammalia</taxon>
        <taxon>Eutheria</taxon>
        <taxon>Euarchontoglires</taxon>
        <taxon>Glires</taxon>
        <taxon>Rodentia</taxon>
        <taxon>Myomorpha</taxon>
        <taxon>Muroidea</taxon>
        <taxon>Muridae</taxon>
        <taxon>Murinae</taxon>
        <taxon>Mus</taxon>
        <taxon>Mus</taxon>
    </lineage>
</organism>
<gene>
    <name evidence="14" type="primary">Slc22a4</name>
    <name type="synonym">Octn1</name>
</gene>
<dbReference type="EMBL" id="AB016257">
    <property type="protein sequence ID" value="BAA36626.1"/>
    <property type="molecule type" value="mRNA"/>
</dbReference>
<dbReference type="EMBL" id="BC010590">
    <property type="protein sequence ID" value="AAH10590.1"/>
    <property type="molecule type" value="mRNA"/>
</dbReference>
<dbReference type="CCDS" id="CCDS24689.1"/>
<dbReference type="RefSeq" id="NP_062661.1">
    <property type="nucleotide sequence ID" value="NM_019687.4"/>
</dbReference>
<dbReference type="SMR" id="Q9Z306"/>
<dbReference type="FunCoup" id="Q9Z306">
    <property type="interactions" value="81"/>
</dbReference>
<dbReference type="STRING" id="10090.ENSMUSP00000020586"/>
<dbReference type="ChEMBL" id="CHEMBL2073694"/>
<dbReference type="GlyCosmos" id="Q9Z306">
    <property type="glycosylation" value="3 sites, No reported glycans"/>
</dbReference>
<dbReference type="GlyGen" id="Q9Z306">
    <property type="glycosylation" value="3 sites"/>
</dbReference>
<dbReference type="iPTMnet" id="Q9Z306"/>
<dbReference type="PhosphoSitePlus" id="Q9Z306"/>
<dbReference type="SwissPalm" id="Q9Z306"/>
<dbReference type="jPOST" id="Q9Z306"/>
<dbReference type="PaxDb" id="10090-ENSMUSP00000020586"/>
<dbReference type="ProteomicsDB" id="253357"/>
<dbReference type="Antibodypedia" id="26020">
    <property type="antibodies" value="139 antibodies from 25 providers"/>
</dbReference>
<dbReference type="DNASU" id="30805"/>
<dbReference type="Ensembl" id="ENSMUST00000020586.7">
    <property type="protein sequence ID" value="ENSMUSP00000020586.7"/>
    <property type="gene ID" value="ENSMUSG00000020334.7"/>
</dbReference>
<dbReference type="GeneID" id="30805"/>
<dbReference type="KEGG" id="mmu:30805"/>
<dbReference type="UCSC" id="uc007ixe.1">
    <property type="organism name" value="mouse"/>
</dbReference>
<dbReference type="AGR" id="MGI:1353479"/>
<dbReference type="CTD" id="6583"/>
<dbReference type="MGI" id="MGI:1353479">
    <property type="gene designation" value="Slc22a4"/>
</dbReference>
<dbReference type="VEuPathDB" id="HostDB:ENSMUSG00000020334"/>
<dbReference type="eggNOG" id="KOG0255">
    <property type="taxonomic scope" value="Eukaryota"/>
</dbReference>
<dbReference type="GeneTree" id="ENSGT00940000154155"/>
<dbReference type="HOGENOM" id="CLU_001265_33_4_1"/>
<dbReference type="InParanoid" id="Q9Z306"/>
<dbReference type="OMA" id="DAYFNCF"/>
<dbReference type="OrthoDB" id="59505at9989"/>
<dbReference type="PhylomeDB" id="Q9Z306"/>
<dbReference type="TreeFam" id="TF315847"/>
<dbReference type="Reactome" id="R-MMU-549127">
    <property type="pathway name" value="Organic cation transport"/>
</dbReference>
<dbReference type="BioGRID-ORCS" id="30805">
    <property type="hits" value="4 hits in 79 CRISPR screens"/>
</dbReference>
<dbReference type="ChiTaRS" id="Slc22a4">
    <property type="organism name" value="mouse"/>
</dbReference>
<dbReference type="PRO" id="PR:Q9Z306"/>
<dbReference type="Proteomes" id="UP000000589">
    <property type="component" value="Chromosome 11"/>
</dbReference>
<dbReference type="RNAct" id="Q9Z306">
    <property type="molecule type" value="protein"/>
</dbReference>
<dbReference type="Bgee" id="ENSMUSG00000020334">
    <property type="expression patterns" value="Expressed in right kidney and 120 other cell types or tissues"/>
</dbReference>
<dbReference type="GO" id="GO:0016324">
    <property type="term" value="C:apical plasma membrane"/>
    <property type="evidence" value="ECO:0000314"/>
    <property type="project" value="UniProtKB"/>
</dbReference>
<dbReference type="GO" id="GO:0009925">
    <property type="term" value="C:basal plasma membrane"/>
    <property type="evidence" value="ECO:0000250"/>
    <property type="project" value="UniProtKB"/>
</dbReference>
<dbReference type="GO" id="GO:0031966">
    <property type="term" value="C:mitochondrial membrane"/>
    <property type="evidence" value="ECO:0000314"/>
    <property type="project" value="UniProtKB"/>
</dbReference>
<dbReference type="GO" id="GO:0005739">
    <property type="term" value="C:mitochondrion"/>
    <property type="evidence" value="ECO:0000314"/>
    <property type="project" value="MGI"/>
</dbReference>
<dbReference type="GO" id="GO:0005277">
    <property type="term" value="F:acetylcholine transmembrane transporter activity"/>
    <property type="evidence" value="ECO:0007669"/>
    <property type="project" value="Ensembl"/>
</dbReference>
<dbReference type="GO" id="GO:0015171">
    <property type="term" value="F:amino acid transmembrane transporter activity"/>
    <property type="evidence" value="ECO:0007669"/>
    <property type="project" value="Ensembl"/>
</dbReference>
<dbReference type="GO" id="GO:0015199">
    <property type="term" value="F:amino-acid betaine transmembrane transporter activity"/>
    <property type="evidence" value="ECO:0000250"/>
    <property type="project" value="UniProtKB"/>
</dbReference>
<dbReference type="GO" id="GO:0005524">
    <property type="term" value="F:ATP binding"/>
    <property type="evidence" value="ECO:0007669"/>
    <property type="project" value="UniProtKB-KW"/>
</dbReference>
<dbReference type="GO" id="GO:0015226">
    <property type="term" value="F:carnitine transmembrane transporter activity"/>
    <property type="evidence" value="ECO:0000314"/>
    <property type="project" value="MGI"/>
</dbReference>
<dbReference type="GO" id="GO:0030165">
    <property type="term" value="F:PDZ domain binding"/>
    <property type="evidence" value="ECO:0007669"/>
    <property type="project" value="Ensembl"/>
</dbReference>
<dbReference type="GO" id="GO:0015293">
    <property type="term" value="F:symporter activity"/>
    <property type="evidence" value="ECO:0007669"/>
    <property type="project" value="UniProtKB-KW"/>
</dbReference>
<dbReference type="GO" id="GO:0089718">
    <property type="term" value="P:amino acid import across plasma membrane"/>
    <property type="evidence" value="ECO:0007669"/>
    <property type="project" value="Ensembl"/>
</dbReference>
<dbReference type="GO" id="GO:0009437">
    <property type="term" value="P:carnitine metabolic process"/>
    <property type="evidence" value="ECO:0000316"/>
    <property type="project" value="MGI"/>
</dbReference>
<dbReference type="GO" id="GO:0015879">
    <property type="term" value="P:carnitine transport"/>
    <property type="evidence" value="ECO:0000314"/>
    <property type="project" value="MGI"/>
</dbReference>
<dbReference type="GO" id="GO:0015697">
    <property type="term" value="P:quaternary ammonium group transport"/>
    <property type="evidence" value="ECO:0000314"/>
    <property type="project" value="MGI"/>
</dbReference>
<dbReference type="GO" id="GO:0006814">
    <property type="term" value="P:sodium ion transport"/>
    <property type="evidence" value="ECO:0007669"/>
    <property type="project" value="UniProtKB-KW"/>
</dbReference>
<dbReference type="GO" id="GO:0006641">
    <property type="term" value="P:triglyceride metabolic process"/>
    <property type="evidence" value="ECO:0000316"/>
    <property type="project" value="MGI"/>
</dbReference>
<dbReference type="GO" id="GO:0042908">
    <property type="term" value="P:xenobiotic transport"/>
    <property type="evidence" value="ECO:0007669"/>
    <property type="project" value="Ensembl"/>
</dbReference>
<dbReference type="FunFam" id="1.20.1250.20:FF:000070">
    <property type="entry name" value="Solute carrier family 22 member 5"/>
    <property type="match status" value="1"/>
</dbReference>
<dbReference type="Gene3D" id="1.20.1250.20">
    <property type="entry name" value="MFS general substrate transporter like domains"/>
    <property type="match status" value="1"/>
</dbReference>
<dbReference type="InterPro" id="IPR020846">
    <property type="entry name" value="MFS_dom"/>
</dbReference>
<dbReference type="InterPro" id="IPR005828">
    <property type="entry name" value="MFS_sugar_transport-like"/>
</dbReference>
<dbReference type="InterPro" id="IPR036259">
    <property type="entry name" value="MFS_trans_sf"/>
</dbReference>
<dbReference type="InterPro" id="IPR004749">
    <property type="entry name" value="Orgcat_transp/SVOP"/>
</dbReference>
<dbReference type="InterPro" id="IPR005829">
    <property type="entry name" value="Sugar_transporter_CS"/>
</dbReference>
<dbReference type="NCBIfam" id="TIGR00898">
    <property type="entry name" value="2A0119"/>
    <property type="match status" value="1"/>
</dbReference>
<dbReference type="PANTHER" id="PTHR24064">
    <property type="entry name" value="SOLUTE CARRIER FAMILY 22 MEMBER"/>
    <property type="match status" value="1"/>
</dbReference>
<dbReference type="Pfam" id="PF00083">
    <property type="entry name" value="Sugar_tr"/>
    <property type="match status" value="1"/>
</dbReference>
<dbReference type="SUPFAM" id="SSF103473">
    <property type="entry name" value="MFS general substrate transporter"/>
    <property type="match status" value="1"/>
</dbReference>
<dbReference type="PROSITE" id="PS50850">
    <property type="entry name" value="MFS"/>
    <property type="match status" value="1"/>
</dbReference>
<dbReference type="PROSITE" id="PS00216">
    <property type="entry name" value="SUGAR_TRANSPORT_1"/>
    <property type="match status" value="1"/>
</dbReference>
<accession>Q9Z306</accession>
<sequence length="553" mass="62290">MRDYDEVIAFLGEWGPFQRLIFFLLSASIIPNGFNGMSVVFLAGTPEHRCLVPDTVNLSSSWRNHSIPLETKDGRQVPQSCRRYRLATIANFSAMGLEPGQDVDLEQLEQESCLDGWEYDKDIFLSTIVTEWNLVCEDDWKTPLTTSLFFVGVLCGSFVSGQLSDRFGRKKVLFATMAVQTGFSFVQIFSTNWEMFTVLFAIVGMGQISNYVVAFILGTEILSKSVRIIFSTLGVCTFFAIGYMVLPLFAYFIRDWRMLLLALTLPGLFCVPLWWFIPESPRWLISQRRFAEAEQIIQKAAKMNSIVAPAGIFDPLELQELNSLKQQKVIILDLFRTRNIATITVMAVMLWMLTSVGYFALSLNVPNLHGDVYLNCFLSGLIEVPAYFTAWLLLRTLPRRYIIAGVLFWGGGVLLLIQVVPEDYNFVSIGLVMLGKFGITSAFSMLYVFTAELYPTLVRNMAVGITSMASRVGSIIAPYFVYLGAYNRLLPYILMGSLTVLIGIITLFFPESFGVTLPENLEQMQKVRGFRCGKKSTVSVDREESPKVLITAF</sequence>
<protein>
    <recommendedName>
        <fullName evidence="11">Solute carrier family 22 member 4</fullName>
    </recommendedName>
    <alternativeName>
        <fullName evidence="10">Organic cation/carnitine transporter 1</fullName>
        <shortName evidence="10">Octn1</shortName>
    </alternativeName>
</protein>
<proteinExistence type="evidence at protein level"/>
<reference key="1">
    <citation type="journal article" date="2000" name="J. Biol. Chem.">
        <title>Molecular and functional characterization of organic cation/carnitine transporter family in mice.</title>
        <authorList>
            <person name="Tamai I."/>
            <person name="Ohashi R."/>
            <person name="Nezu J."/>
            <person name="Sai Y."/>
            <person name="Kobayashi D."/>
            <person name="Oku A."/>
            <person name="Shimane M."/>
            <person name="Tsuji A."/>
        </authorList>
    </citation>
    <scope>NUCLEOTIDE SEQUENCE [MRNA]</scope>
    <scope>FUNCTION</scope>
    <scope>TRANSPORTER ACTIVITY</scope>
    <scope>TISSUE SPECIFICITY</scope>
    <scope>MISCELLANEOUS</scope>
    <source>
        <strain>C57BL/6J</strain>
        <tissue>Kidney</tissue>
    </source>
</reference>
<reference key="2">
    <citation type="journal article" date="2004" name="Genome Res.">
        <title>The status, quality, and expansion of the NIH full-length cDNA project: the Mammalian Gene Collection (MGC).</title>
        <authorList>
            <consortium name="The MGC Project Team"/>
        </authorList>
    </citation>
    <scope>NUCLEOTIDE SEQUENCE [LARGE SCALE MRNA]</scope>
    <source>
        <tissue>Mammary tumor</tissue>
    </source>
</reference>
<reference key="3">
    <citation type="journal article" date="2003" name="Kidney Int.">
        <title>PDZK1: I. a major scaffolder in brush borders of proximal tubular cells.</title>
        <authorList>
            <person name="Gisler S.M."/>
            <person name="Pribanic S."/>
            <person name="Bacic D."/>
            <person name="Forrer P."/>
            <person name="Gantenbein A."/>
            <person name="Sabourin L.A."/>
            <person name="Tsuji A."/>
            <person name="Zhao Z.-S."/>
            <person name="Manser E."/>
            <person name="Biber J."/>
            <person name="Murer H."/>
        </authorList>
    </citation>
    <scope>INTERACTION WITH PDZK1</scope>
</reference>
<reference key="4">
    <citation type="journal article" date="2004" name="Mol. Pharm.">
        <title>Involvement of OCTN1 (SLC22A4) in pH-dependent transport of organic cations.</title>
        <authorList>
            <person name="Tamai I."/>
            <person name="Nakanishi T."/>
            <person name="Kobayashi D."/>
            <person name="China K."/>
            <person name="Kosugi Y."/>
            <person name="Nezu J."/>
            <person name="Sai Y."/>
            <person name="Tsuji A."/>
        </authorList>
    </citation>
    <scope>SUBCELLULAR LOCATION</scope>
    <scope>TISSUE SPECIFICITY</scope>
    <scope>MISCELLANEOUS</scope>
</reference>
<reference key="5">
    <citation type="journal article" date="2006" name="Biochem. Biophys. Res. Commun.">
        <title>Novel localization of OCTN1, an organic cation/carnitine transporter, to mammalian mitochondria.</title>
        <authorList>
            <person name="Lamhonwah A.M."/>
            <person name="Tein I."/>
        </authorList>
    </citation>
    <scope>FUNCTION</scope>
    <scope>SUBCELLULAR LOCATION</scope>
    <scope>TISSUE SPECIFICITY</scope>
</reference>
<reference key="6">
    <citation type="journal article" date="2010" name="Cell">
        <title>A tissue-specific atlas of mouse protein phosphorylation and expression.</title>
        <authorList>
            <person name="Huttlin E.L."/>
            <person name="Jedrychowski M.P."/>
            <person name="Elias J.E."/>
            <person name="Goswami T."/>
            <person name="Rad R."/>
            <person name="Beausoleil S.A."/>
            <person name="Villen J."/>
            <person name="Haas W."/>
            <person name="Sowa M.E."/>
            <person name="Gygi S.P."/>
        </authorList>
    </citation>
    <scope>IDENTIFICATION BY MASS SPECTROMETRY [LARGE SCALE ANALYSIS]</scope>
    <source>
        <tissue>Kidney</tissue>
    </source>
</reference>
<reference key="7">
    <citation type="journal article" date="2010" name="Drug Metab. Dispos.">
        <title>Functional expression of carnitine/organic cation transporter OCTN1/SLC22A4 in mouse small intestine and liver.</title>
        <authorList>
            <person name="Sugiura T."/>
            <person name="Kato S."/>
            <person name="Shimizu T."/>
            <person name="Wakayama T."/>
            <person name="Nakamichi N."/>
            <person name="Kubo Y."/>
            <person name="Iwata D."/>
            <person name="Suzuki K."/>
            <person name="Soga T."/>
            <person name="Asano M."/>
            <person name="Iseki S."/>
            <person name="Tamai I."/>
            <person name="Tsuji A."/>
            <person name="Kato Y."/>
        </authorList>
    </citation>
    <scope>FUNCTION</scope>
    <scope>TRANSPORTER ACTIVITY</scope>
    <scope>SUBCELLULAR LOCATION</scope>
    <scope>TISSUE SPECIFICITY</scope>
    <scope>DISRUPTION PHENOTYPE</scope>
</reference>
<reference key="8">
    <citation type="journal article" date="2010" name="Pharm. Res.">
        <title>Gene knockout and metabolome analysis of carnitine/organic cation transporter OCTN1.</title>
        <authorList>
            <person name="Kato Y."/>
            <person name="Kubo Y."/>
            <person name="Iwata D."/>
            <person name="Kato S."/>
            <person name="Sudo T."/>
            <person name="Sugiura T."/>
            <person name="Kagaya T."/>
            <person name="Wakayama T."/>
            <person name="Hirayama A."/>
            <person name="Sugimoto M."/>
            <person name="Sugihara K."/>
            <person name="Kaneko S."/>
            <person name="Soga T."/>
            <person name="Asano M."/>
            <person name="Tomita M."/>
            <person name="Matsui T."/>
            <person name="Wada M."/>
            <person name="Tsuji A."/>
        </authorList>
    </citation>
    <scope>FUNCTION</scope>
    <scope>TRANSPORTER ACTIVITY</scope>
    <scope>BIOPHYSICOCHEMICAL PROPERTIES</scope>
    <scope>DISRUPTION PHENOTYPE</scope>
</reference>
<name>S22A4_MOUSE</name>
<keyword id="KW-0067">ATP-binding</keyword>
<keyword id="KW-1003">Cell membrane</keyword>
<keyword id="KW-0325">Glycoprotein</keyword>
<keyword id="KW-0406">Ion transport</keyword>
<keyword id="KW-0472">Membrane</keyword>
<keyword id="KW-0496">Mitochondrion</keyword>
<keyword id="KW-0547">Nucleotide-binding</keyword>
<keyword id="KW-1185">Reference proteome</keyword>
<keyword id="KW-0915">Sodium</keyword>
<keyword id="KW-0739">Sodium transport</keyword>
<keyword id="KW-0769">Symport</keyword>
<keyword id="KW-0812">Transmembrane</keyword>
<keyword id="KW-1133">Transmembrane helix</keyword>
<keyword id="KW-0813">Transport</keyword>
<evidence type="ECO:0000250" key="1">
    <source>
        <dbReference type="UniProtKB" id="Q9H015"/>
    </source>
</evidence>
<evidence type="ECO:0000250" key="2">
    <source>
        <dbReference type="UniProtKB" id="Q9R141"/>
    </source>
</evidence>
<evidence type="ECO:0000255" key="3"/>
<evidence type="ECO:0000269" key="4">
    <source>
    </source>
</evidence>
<evidence type="ECO:0000269" key="5">
    <source>
    </source>
</evidence>
<evidence type="ECO:0000269" key="6">
    <source>
    </source>
</evidence>
<evidence type="ECO:0000269" key="7">
    <source>
    </source>
</evidence>
<evidence type="ECO:0000269" key="8">
    <source>
    </source>
</evidence>
<evidence type="ECO:0000269" key="9">
    <source>
    </source>
</evidence>
<evidence type="ECO:0000303" key="10">
    <source>
    </source>
</evidence>
<evidence type="ECO:0000303" key="11">
    <source>
    </source>
</evidence>
<evidence type="ECO:0000305" key="12"/>
<evidence type="ECO:0000305" key="13">
    <source>
    </source>
</evidence>
<evidence type="ECO:0000312" key="14">
    <source>
        <dbReference type="MGI" id="MGI:1353479"/>
    </source>
</evidence>
<feature type="chain" id="PRO_0000220498" description="Solute carrier family 22 member 4">
    <location>
        <begin position="1"/>
        <end position="553"/>
    </location>
</feature>
<feature type="topological domain" description="Cytoplasmic" evidence="3">
    <location>
        <begin position="1"/>
        <end position="20"/>
    </location>
</feature>
<feature type="transmembrane region" description="Helical; Name=1" evidence="3">
    <location>
        <begin position="21"/>
        <end position="41"/>
    </location>
</feature>
<feature type="topological domain" description="Extracellular" evidence="3">
    <location>
        <begin position="42"/>
        <end position="142"/>
    </location>
</feature>
<feature type="transmembrane region" description="Helical; Name=2" evidence="3">
    <location>
        <begin position="143"/>
        <end position="163"/>
    </location>
</feature>
<feature type="topological domain" description="Cytoplasmic" evidence="3">
    <location>
        <begin position="164"/>
        <end position="171"/>
    </location>
</feature>
<feature type="transmembrane region" description="Helical; Name=3" evidence="3">
    <location>
        <begin position="172"/>
        <end position="192"/>
    </location>
</feature>
<feature type="topological domain" description="Extracellular" evidence="3">
    <location>
        <begin position="193"/>
        <end position="197"/>
    </location>
</feature>
<feature type="transmembrane region" description="Helical; Name=4" evidence="3">
    <location>
        <begin position="198"/>
        <end position="218"/>
    </location>
</feature>
<feature type="topological domain" description="Cytoplasmic" evidence="3">
    <location>
        <begin position="219"/>
        <end position="232"/>
    </location>
</feature>
<feature type="transmembrane region" description="Helical; Name=5" evidence="3">
    <location>
        <begin position="233"/>
        <end position="253"/>
    </location>
</feature>
<feature type="topological domain" description="Extracellular" evidence="3">
    <location>
        <begin position="254"/>
        <end position="257"/>
    </location>
</feature>
<feature type="transmembrane region" description="Helical; Name=6" evidence="3">
    <location>
        <begin position="258"/>
        <end position="278"/>
    </location>
</feature>
<feature type="topological domain" description="Cytoplasmic" evidence="3">
    <location>
        <begin position="279"/>
        <end position="339"/>
    </location>
</feature>
<feature type="transmembrane region" description="Helical; Name=7" evidence="3">
    <location>
        <begin position="340"/>
        <end position="360"/>
    </location>
</feature>
<feature type="topological domain" description="Extracellular" evidence="3">
    <location>
        <begin position="361"/>
        <end position="373"/>
    </location>
</feature>
<feature type="transmembrane region" description="Helical; Name=8" evidence="3">
    <location>
        <begin position="374"/>
        <end position="394"/>
    </location>
</feature>
<feature type="topological domain" description="Cytoplasmic" evidence="3">
    <location>
        <begin position="395"/>
        <end position="400"/>
    </location>
</feature>
<feature type="transmembrane region" description="Helical; Name=9" evidence="3">
    <location>
        <begin position="401"/>
        <end position="421"/>
    </location>
</feature>
<feature type="topological domain" description="Extracellular" evidence="3">
    <location>
        <begin position="422"/>
        <end position="428"/>
    </location>
</feature>
<feature type="transmembrane region" description="Helical; Name=10" evidence="3">
    <location>
        <begin position="429"/>
        <end position="449"/>
    </location>
</feature>
<feature type="topological domain" description="Cytoplasmic" evidence="3">
    <location>
        <begin position="450"/>
        <end position="462"/>
    </location>
</feature>
<feature type="transmembrane region" description="Helical; Name=11" evidence="3">
    <location>
        <begin position="463"/>
        <end position="483"/>
    </location>
</feature>
<feature type="topological domain" description="Extracellular" evidence="3">
    <location>
        <begin position="484"/>
        <end position="488"/>
    </location>
</feature>
<feature type="transmembrane region" description="Helical; Name=12" evidence="3">
    <location>
        <begin position="489"/>
        <end position="509"/>
    </location>
</feature>
<feature type="topological domain" description="Cytoplasmic" evidence="3">
    <location>
        <begin position="510"/>
        <end position="553"/>
    </location>
</feature>
<feature type="binding site" evidence="3">
    <location>
        <begin position="218"/>
        <end position="225"/>
    </location>
    <ligand>
        <name>ATP</name>
        <dbReference type="ChEBI" id="CHEBI:30616"/>
    </ligand>
</feature>
<feature type="glycosylation site" description="N-linked (GlcNAc...) asparagine" evidence="3">
    <location>
        <position position="57"/>
    </location>
</feature>
<feature type="glycosylation site" description="N-linked (GlcNAc...) asparagine" evidence="3">
    <location>
        <position position="64"/>
    </location>
</feature>
<feature type="glycosylation site" description="N-linked (GlcNAc...) asparagine" evidence="3">
    <location>
        <position position="91"/>
    </location>
</feature>
<comment type="function">
    <text evidence="1 2 4 7 8 9">Transporter that mediates the transport of endogenous and microbial zwitterions and organic cations (PubMed:11010964, PubMed:20224991, PubMed:20601551). Functions as a Na(+)-dependent and pH-dependent high affinity microbial symporter of potent food-derived antioxidant ergothioeine (By similarity). Transports one sodium ion with one ergothioeine molecule (By similarity). Involved in the absorption of ergothioneine from the luminal/apical side of the small intestine and renal tubular cells, and into non-parenchymal liver cells, thereby contributing to maintain steady-state ergothioneine level in the body (PubMed:20224991, PubMed:20601551). Also mediates the bidirectional transport of acetycholine, although the exact transport mechanism has not been fully identified yet (By similarity). Most likely exports anti-inflammatory acetylcholine in non-neuronal tissues, thereby contributing to the non-neuronal cholinergic system (By similarity). Displays a general physiological role linked to better survival by controlling inflammation and oxidative stress, which may be related to ergothioneine and acetycholine transports (PubMed:20224991). May also function as a low-affinity Na(+)-dependent transporter of L-carnitine through the mitochondrial membrane, thereby maintaining intracellular carnitine homeostasis (PubMed:11010964, PubMed:16729965). May contribute to regulate the transport of cationic compounds in testis across the blood-testis-barrier (By similarity).</text>
</comment>
<comment type="catalytic activity">
    <reaction evidence="8 9">
        <text>ergothioneine(out) + Na(+)(out) = ergothioneine(in) + Na(+)(in)</text>
        <dbReference type="Rhea" id="RHEA:75843"/>
        <dbReference type="ChEBI" id="CHEBI:29101"/>
        <dbReference type="ChEBI" id="CHEBI:134344"/>
    </reaction>
</comment>
<comment type="catalytic activity">
    <reaction evidence="1">
        <text>acetylcholine(in) = acetylcholine(out)</text>
        <dbReference type="Rhea" id="RHEA:74663"/>
        <dbReference type="ChEBI" id="CHEBI:15355"/>
    </reaction>
</comment>
<comment type="catalytic activity">
    <reaction evidence="13">
        <text>(R)-carnitine(out) + Na(+)(out) = (R)-carnitine(in) + Na(+)(in)</text>
        <dbReference type="Rhea" id="RHEA:72091"/>
        <dbReference type="ChEBI" id="CHEBI:16347"/>
        <dbReference type="ChEBI" id="CHEBI:29101"/>
    </reaction>
</comment>
<comment type="catalytic activity">
    <reaction evidence="1">
        <text>glycine betaine(out) + Na(+)(out) = glycine betaine(in) + Na(+)(in)</text>
        <dbReference type="Rhea" id="RHEA:72115"/>
        <dbReference type="ChEBI" id="CHEBI:17750"/>
        <dbReference type="ChEBI" id="CHEBI:29101"/>
    </reaction>
    <physiologicalReaction direction="left-to-right" evidence="1">
        <dbReference type="Rhea" id="RHEA:72116"/>
    </physiologicalReaction>
</comment>
<comment type="activity regulation">
    <text evidence="1">Allosterically activated by intracellular ATP.</text>
</comment>
<comment type="biophysicochemical properties">
    <kinetics>
        <KM evidence="8">4.68 uM for ergothioneine (at pH 7.4)</KM>
        <Vmax evidence="8">531.0 pmol/min/mg enzyme for ergothioneine uptake (at pH 7.4)</Vmax>
    </kinetics>
</comment>
<comment type="subunit">
    <text evidence="5">Interacts with PDZK1.</text>
</comment>
<comment type="subcellular location">
    <subcellularLocation>
        <location evidence="6 9">Apical cell membrane</location>
        <topology evidence="12">Multi-pass membrane protein</topology>
    </subcellularLocation>
    <subcellularLocation>
        <location evidence="7">Mitochondrion membrane</location>
        <topology evidence="12">Multi-pass membrane protein</topology>
    </subcellularLocation>
    <subcellularLocation>
        <location evidence="1">Basal cell membrane</location>
        <topology evidence="12">Multi-pass membrane protein</topology>
    </subcellularLocation>
    <text evidence="6 9">Localized to the apical membrane of small intestines (PubMed:20601551). Localized to the apical membrane of cortical proximal tubular epithelial cells in kidney (PubMed:15832501).</text>
</comment>
<comment type="tissue specificity">
    <text evidence="4 6 7 9">Expressed in kidney (PubMed:11010964, PubMed:15832501). Expressed in small intestines (PubMed:20601551). Expressed in liver in non-parenchymal liver tissue such as sinusoidal vessels (PubMed:11010964, PubMed:20601551). Weakly expressed in lung and brain (PubMed:11010964). Expressed in testis and spleen (PubMed:11010964). Expressed in heart (PubMed:16729965).</text>
</comment>
<comment type="disruption phenotype">
    <text evidence="8 9">Knockout mice developed normally and did not display any gross phenotypic abnormalities. Knockout mice show a complete deficiency of ergothioneine in heart, liver, small intestine, kidney and erythrocytes. Impaired intestinal absorption and renal reabsorption of ergothioneine (PubMed:20224991, PubMed:20601551). Lower tolerance to intestinal oxidative stress (PubMed:20224991).</text>
</comment>
<comment type="miscellaneous">
    <text evidence="4 6">Mediates the Na(+)-independent and pH-dependent bidirectional transport of exogenous prototype organic cation tetraethylammonium (TEA).</text>
</comment>
<comment type="similarity">
    <text evidence="12">Belongs to the major facilitator (TC 2.A.1) superfamily. Organic cation transporter (TC 2.A.1.19) family.</text>
</comment>
<comment type="caution">
    <text evidence="12">It is unclear whether it transports carnitine in vivo.</text>
</comment>